<keyword id="KW-0687">Ribonucleoprotein</keyword>
<keyword id="KW-0689">Ribosomal protein</keyword>
<name>RS10_PSEU2</name>
<gene>
    <name evidence="1" type="primary">rpsJ</name>
    <name type="ordered locus">Psyr_4549</name>
</gene>
<organism>
    <name type="scientific">Pseudomonas syringae pv. syringae (strain B728a)</name>
    <dbReference type="NCBI Taxonomy" id="205918"/>
    <lineage>
        <taxon>Bacteria</taxon>
        <taxon>Pseudomonadati</taxon>
        <taxon>Pseudomonadota</taxon>
        <taxon>Gammaproteobacteria</taxon>
        <taxon>Pseudomonadales</taxon>
        <taxon>Pseudomonadaceae</taxon>
        <taxon>Pseudomonas</taxon>
        <taxon>Pseudomonas syringae</taxon>
    </lineage>
</organism>
<evidence type="ECO:0000255" key="1">
    <source>
        <dbReference type="HAMAP-Rule" id="MF_00508"/>
    </source>
</evidence>
<evidence type="ECO:0000305" key="2"/>
<comment type="function">
    <text evidence="1">Involved in the binding of tRNA to the ribosomes.</text>
</comment>
<comment type="subunit">
    <text evidence="1">Part of the 30S ribosomal subunit.</text>
</comment>
<comment type="similarity">
    <text evidence="1">Belongs to the universal ribosomal protein uS10 family.</text>
</comment>
<comment type="sequence caution" evidence="2">
    <conflict type="erroneous initiation">
        <sequence resource="EMBL-CDS" id="AAY39579"/>
    </conflict>
</comment>
<reference key="1">
    <citation type="journal article" date="2005" name="Proc. Natl. Acad. Sci. U.S.A.">
        <title>Comparison of the complete genome sequences of Pseudomonas syringae pv. syringae B728a and pv. tomato DC3000.</title>
        <authorList>
            <person name="Feil H."/>
            <person name="Feil W.S."/>
            <person name="Chain P."/>
            <person name="Larimer F."/>
            <person name="Dibartolo G."/>
            <person name="Copeland A."/>
            <person name="Lykidis A."/>
            <person name="Trong S."/>
            <person name="Nolan M."/>
            <person name="Goltsman E."/>
            <person name="Thiel J."/>
            <person name="Malfatti S."/>
            <person name="Loper J.E."/>
            <person name="Lapidus A."/>
            <person name="Detter J.C."/>
            <person name="Land M."/>
            <person name="Richardson P.M."/>
            <person name="Kyrpides N.C."/>
            <person name="Ivanova N."/>
            <person name="Lindow S.E."/>
        </authorList>
    </citation>
    <scope>NUCLEOTIDE SEQUENCE [LARGE SCALE GENOMIC DNA]</scope>
    <source>
        <strain>B728a</strain>
    </source>
</reference>
<accession>Q4ZMP3</accession>
<dbReference type="EMBL" id="CP000075">
    <property type="protein sequence ID" value="AAY39579.1"/>
    <property type="status" value="ALT_INIT"/>
    <property type="molecule type" value="Genomic_DNA"/>
</dbReference>
<dbReference type="RefSeq" id="WP_002555491.1">
    <property type="nucleotide sequence ID" value="NC_007005.1"/>
</dbReference>
<dbReference type="RefSeq" id="YP_237617.2">
    <property type="nucleotide sequence ID" value="NC_007005.1"/>
</dbReference>
<dbReference type="SMR" id="Q4ZMP3"/>
<dbReference type="STRING" id="205918.Psyr_4549"/>
<dbReference type="GeneID" id="96221031"/>
<dbReference type="KEGG" id="psb:Psyr_4549"/>
<dbReference type="PATRIC" id="fig|205918.7.peg.4688"/>
<dbReference type="eggNOG" id="COG0051">
    <property type="taxonomic scope" value="Bacteria"/>
</dbReference>
<dbReference type="HOGENOM" id="CLU_122625_1_2_6"/>
<dbReference type="OrthoDB" id="9804464at2"/>
<dbReference type="Proteomes" id="UP000000426">
    <property type="component" value="Chromosome"/>
</dbReference>
<dbReference type="GO" id="GO:1990904">
    <property type="term" value="C:ribonucleoprotein complex"/>
    <property type="evidence" value="ECO:0007669"/>
    <property type="project" value="UniProtKB-KW"/>
</dbReference>
<dbReference type="GO" id="GO:0005840">
    <property type="term" value="C:ribosome"/>
    <property type="evidence" value="ECO:0007669"/>
    <property type="project" value="UniProtKB-KW"/>
</dbReference>
<dbReference type="GO" id="GO:0003735">
    <property type="term" value="F:structural constituent of ribosome"/>
    <property type="evidence" value="ECO:0007669"/>
    <property type="project" value="InterPro"/>
</dbReference>
<dbReference type="GO" id="GO:0000049">
    <property type="term" value="F:tRNA binding"/>
    <property type="evidence" value="ECO:0007669"/>
    <property type="project" value="UniProtKB-UniRule"/>
</dbReference>
<dbReference type="GO" id="GO:0006412">
    <property type="term" value="P:translation"/>
    <property type="evidence" value="ECO:0007669"/>
    <property type="project" value="UniProtKB-UniRule"/>
</dbReference>
<dbReference type="FunFam" id="3.30.70.600:FF:000001">
    <property type="entry name" value="30S ribosomal protein S10"/>
    <property type="match status" value="1"/>
</dbReference>
<dbReference type="Gene3D" id="3.30.70.600">
    <property type="entry name" value="Ribosomal protein S10 domain"/>
    <property type="match status" value="1"/>
</dbReference>
<dbReference type="HAMAP" id="MF_00508">
    <property type="entry name" value="Ribosomal_uS10"/>
    <property type="match status" value="1"/>
</dbReference>
<dbReference type="InterPro" id="IPR001848">
    <property type="entry name" value="Ribosomal_uS10"/>
</dbReference>
<dbReference type="InterPro" id="IPR018268">
    <property type="entry name" value="Ribosomal_uS10_CS"/>
</dbReference>
<dbReference type="InterPro" id="IPR027486">
    <property type="entry name" value="Ribosomal_uS10_dom"/>
</dbReference>
<dbReference type="InterPro" id="IPR036838">
    <property type="entry name" value="Ribosomal_uS10_dom_sf"/>
</dbReference>
<dbReference type="NCBIfam" id="NF001861">
    <property type="entry name" value="PRK00596.1"/>
    <property type="match status" value="1"/>
</dbReference>
<dbReference type="NCBIfam" id="TIGR01049">
    <property type="entry name" value="rpsJ_bact"/>
    <property type="match status" value="1"/>
</dbReference>
<dbReference type="PANTHER" id="PTHR11700">
    <property type="entry name" value="30S RIBOSOMAL PROTEIN S10 FAMILY MEMBER"/>
    <property type="match status" value="1"/>
</dbReference>
<dbReference type="Pfam" id="PF00338">
    <property type="entry name" value="Ribosomal_S10"/>
    <property type="match status" value="1"/>
</dbReference>
<dbReference type="PRINTS" id="PR00971">
    <property type="entry name" value="RIBOSOMALS10"/>
</dbReference>
<dbReference type="SMART" id="SM01403">
    <property type="entry name" value="Ribosomal_S10"/>
    <property type="match status" value="1"/>
</dbReference>
<dbReference type="SUPFAM" id="SSF54999">
    <property type="entry name" value="Ribosomal protein S10"/>
    <property type="match status" value="1"/>
</dbReference>
<dbReference type="PROSITE" id="PS00361">
    <property type="entry name" value="RIBOSOMAL_S10"/>
    <property type="match status" value="1"/>
</dbReference>
<feature type="chain" id="PRO_0000237083" description="Small ribosomal subunit protein uS10">
    <location>
        <begin position="1"/>
        <end position="103"/>
    </location>
</feature>
<proteinExistence type="inferred from homology"/>
<sequence length="103" mass="11767">MQNQQIRIRLKAFDHRLIDQSTQEIVETAKRTGAQVRGPIPLPTRKERFTVLVSPHVNKDARDQYEIRTHKRVLDIVQPTEKTVDALMKLDLAAGVEVQISLG</sequence>
<protein>
    <recommendedName>
        <fullName evidence="1">Small ribosomal subunit protein uS10</fullName>
    </recommendedName>
    <alternativeName>
        <fullName evidence="2">30S ribosomal protein S10</fullName>
    </alternativeName>
</protein>